<gene>
    <name type="primary">ST7</name>
</gene>
<accession>Q2IBE8</accession>
<keyword id="KW-0325">Glycoprotein</keyword>
<keyword id="KW-0472">Membrane</keyword>
<keyword id="KW-0597">Phosphoprotein</keyword>
<keyword id="KW-1185">Reference proteome</keyword>
<keyword id="KW-0812">Transmembrane</keyword>
<keyword id="KW-1133">Transmembrane helix</keyword>
<organism>
    <name type="scientific">Gorilla gorilla gorilla</name>
    <name type="common">Western lowland gorilla</name>
    <dbReference type="NCBI Taxonomy" id="9595"/>
    <lineage>
        <taxon>Eukaryota</taxon>
        <taxon>Metazoa</taxon>
        <taxon>Chordata</taxon>
        <taxon>Craniata</taxon>
        <taxon>Vertebrata</taxon>
        <taxon>Euteleostomi</taxon>
        <taxon>Mammalia</taxon>
        <taxon>Eutheria</taxon>
        <taxon>Euarchontoglires</taxon>
        <taxon>Primates</taxon>
        <taxon>Haplorrhini</taxon>
        <taxon>Catarrhini</taxon>
        <taxon>Hominidae</taxon>
        <taxon>Gorilla</taxon>
    </lineage>
</organism>
<protein>
    <recommendedName>
        <fullName>Suppressor of tumorigenicity 7 protein</fullName>
    </recommendedName>
</protein>
<comment type="subcellular location">
    <subcellularLocation>
        <location evidence="3">Membrane</location>
        <topology evidence="3">Multi-pass membrane protein</topology>
    </subcellularLocation>
</comment>
<comment type="similarity">
    <text evidence="3">Belongs to the ST7 family.</text>
</comment>
<feature type="chain" id="PRO_0000339200" description="Suppressor of tumorigenicity 7 protein">
    <location>
        <begin position="1"/>
        <end position="585"/>
    </location>
</feature>
<feature type="transmembrane region" description="Helical" evidence="2">
    <location>
        <begin position="15"/>
        <end position="35"/>
    </location>
</feature>
<feature type="transmembrane region" description="Helical" evidence="2">
    <location>
        <begin position="62"/>
        <end position="82"/>
    </location>
</feature>
<feature type="transmembrane region" description="Helical" evidence="2">
    <location>
        <begin position="512"/>
        <end position="532"/>
    </location>
</feature>
<feature type="modified residue" description="Phosphoserine" evidence="1">
    <location>
        <position position="386"/>
    </location>
</feature>
<feature type="glycosylation site" description="N-linked (GlcNAc...) asparagine" evidence="2">
    <location>
        <position position="47"/>
    </location>
</feature>
<name>ST7_GORGO</name>
<sequence>MAEAATGFLEQLKSCIVWSWTYLWTVWFFIVLFLVYILRVPLKINDNLSTVSMFLNTLTPKFYVALTGTSSLISGLILIFEWWYFRKYGTSFIEQVSVSHLRPLLGGVDNNSSNNSNSSNGDSDSNRQSVSECKVWRNPLNLFRGAEYNRYTWVTGREPLTYYDMNLSAQDHQTFFTCDSDHLRPADAIMQKAWRERNPQARISAAHEALEINEIRSRVEVPLIASSTIWEIKLLPKCATAYILLAEEEATTIAEAEKLFKQALKAGDGCYRRSQQLQHHGSQYEAQHRRDTNVLVYIKRRLAMCARRLGRTREAVKMMRDLMKEFPLLSMFNIHENLLEALLELQAYADVQAVLAKYDDISLPKSATICYTAALLKARAVSDKFSPEAASRRGLSTAEMNAVEAIHRAVEFNPHVPKYLLEMKSLILPPEHILKRGDSEAIAYAFFHLAHWKRVEGALNLLHCTWEGTFRMIPYPLEKGHLFYPYPICTETADRELLPSFHEVSVYPKKELPFFILFTAGLCSFTAMLALLTHQFPELMGVFAKAMIDIFCSAEFRDWNCKSIFMRVEDELEIPPAPQSQHFQN</sequence>
<dbReference type="EMBL" id="DP000025">
    <property type="protein sequence ID" value="ABC87452.1"/>
    <property type="molecule type" value="Genomic_DNA"/>
</dbReference>
<dbReference type="RefSeq" id="XP_030868856.1">
    <property type="nucleotide sequence ID" value="XM_031012996.3"/>
</dbReference>
<dbReference type="FunCoup" id="Q2IBE8">
    <property type="interactions" value="1355"/>
</dbReference>
<dbReference type="STRING" id="9593.ENSGGOP00000014059"/>
<dbReference type="GlyCosmos" id="Q2IBE8">
    <property type="glycosylation" value="1 site, No reported glycans"/>
</dbReference>
<dbReference type="GeneID" id="101128608"/>
<dbReference type="eggNOG" id="KOG3807">
    <property type="taxonomic scope" value="Eukaryota"/>
</dbReference>
<dbReference type="InParanoid" id="Q2IBE8"/>
<dbReference type="Proteomes" id="UP000001519">
    <property type="component" value="Unplaced"/>
</dbReference>
<dbReference type="GO" id="GO:0016020">
    <property type="term" value="C:membrane"/>
    <property type="evidence" value="ECO:0007669"/>
    <property type="project" value="UniProtKB-SubCell"/>
</dbReference>
<dbReference type="CDD" id="cd11557">
    <property type="entry name" value="ST7"/>
    <property type="match status" value="1"/>
</dbReference>
<dbReference type="InterPro" id="IPR007311">
    <property type="entry name" value="ST7"/>
</dbReference>
<dbReference type="PANTHER" id="PTHR12745">
    <property type="entry name" value="SUPPRESSION OF TUMORIGENICITY 7"/>
    <property type="match status" value="1"/>
</dbReference>
<dbReference type="PANTHER" id="PTHR12745:SF10">
    <property type="entry name" value="SUPPRESSOR OF TUMORIGENICITY 7 PROTEIN"/>
    <property type="match status" value="1"/>
</dbReference>
<dbReference type="Pfam" id="PF04184">
    <property type="entry name" value="ST7"/>
    <property type="match status" value="1"/>
</dbReference>
<evidence type="ECO:0000250" key="1">
    <source>
        <dbReference type="UniProtKB" id="Q9NRC1"/>
    </source>
</evidence>
<evidence type="ECO:0000255" key="2"/>
<evidence type="ECO:0000305" key="3"/>
<proteinExistence type="inferred from homology"/>
<reference key="1">
    <citation type="submission" date="2006-01" db="EMBL/GenBank/DDBJ databases">
        <title>NISC comparative sequencing initiative.</title>
        <authorList>
            <person name="Antonellis A."/>
            <person name="Ayele K."/>
            <person name="Benjamin B."/>
            <person name="Blakesley R.W."/>
            <person name="Boakye A."/>
            <person name="Bouffard G.G."/>
            <person name="Brinkley C."/>
            <person name="Brooks S."/>
            <person name="Chu G."/>
            <person name="Coleman H."/>
            <person name="Engle J."/>
            <person name="Gestole M."/>
            <person name="Greene A."/>
            <person name="Guan X."/>
            <person name="Gupta J."/>
            <person name="Haghighi P."/>
            <person name="Han J."/>
            <person name="Hansen N."/>
            <person name="Ho S.-L."/>
            <person name="Hu P."/>
            <person name="Hunter G."/>
            <person name="Hurle B."/>
            <person name="Idol J.R."/>
            <person name="Kwong P."/>
            <person name="Laric P."/>
            <person name="Larson S."/>
            <person name="Lee-Lin S.-Q."/>
            <person name="Legaspi R."/>
            <person name="Madden M."/>
            <person name="Maduro Q.L."/>
            <person name="Maduro V.B."/>
            <person name="Margulies E.H."/>
            <person name="Masiello C."/>
            <person name="Maskeri B."/>
            <person name="McDowell J."/>
            <person name="Mojidi H.A."/>
            <person name="Mullikin J.C."/>
            <person name="Oestreicher J.S."/>
            <person name="Park M."/>
            <person name="Portnoy M.E."/>
            <person name="Prasad A."/>
            <person name="Puri O."/>
            <person name="Reddix-Dugue N."/>
            <person name="Schandler K."/>
            <person name="Schueler M.G."/>
            <person name="Sison C."/>
            <person name="Stantripop S."/>
            <person name="Stephen E."/>
            <person name="Taye A."/>
            <person name="Thomas J.W."/>
            <person name="Thomas P.J."/>
            <person name="Tsipouri V."/>
            <person name="Ung L."/>
            <person name="Vogt J.L."/>
            <person name="Wetherby K.D."/>
            <person name="Young A."/>
            <person name="Green E.D."/>
        </authorList>
    </citation>
    <scope>NUCLEOTIDE SEQUENCE [LARGE SCALE GENOMIC DNA]</scope>
</reference>